<keyword id="KW-1185">Reference proteome</keyword>
<keyword id="KW-0346">Stress response</keyword>
<proteinExistence type="evidence at transcript level"/>
<sequence>MSYYGNGGYNPYGAYGNVPPPVYGTPGLAPPTVHVHTDGGHHHGHHHHHHSFLHELGHALTGHHHHHHGHHFGHHHHHHHGHH</sequence>
<evidence type="ECO:0000256" key="1">
    <source>
        <dbReference type="SAM" id="MobiDB-lite"/>
    </source>
</evidence>
<evidence type="ECO:0000269" key="2">
    <source>
    </source>
</evidence>
<evidence type="ECO:0000305" key="3"/>
<evidence type="ECO:0000312" key="4">
    <source>
        <dbReference type="Proteomes" id="UP000001940"/>
    </source>
</evidence>
<evidence type="ECO:0000312" key="5">
    <source>
        <dbReference type="WormBase" id="F53A9.2"/>
    </source>
</evidence>
<dbReference type="EMBL" id="BX284606">
    <property type="protein sequence ID" value="CCD68801.1"/>
    <property type="molecule type" value="Genomic_DNA"/>
</dbReference>
<dbReference type="PIR" id="T16435">
    <property type="entry name" value="T16435"/>
</dbReference>
<dbReference type="RefSeq" id="NP_509473.1">
    <property type="nucleotide sequence ID" value="NM_077072.6"/>
</dbReference>
<dbReference type="DIP" id="DIP-25911N"/>
<dbReference type="FunCoup" id="Q20689">
    <property type="interactions" value="865"/>
</dbReference>
<dbReference type="IntAct" id="Q20689">
    <property type="interactions" value="1"/>
</dbReference>
<dbReference type="STRING" id="6239.F53A9.2.1"/>
<dbReference type="PaxDb" id="6239-F53A9.2"/>
<dbReference type="EnsemblMetazoa" id="F53A9.2.1">
    <property type="protein sequence ID" value="F53A9.2.1"/>
    <property type="gene ID" value="WBGene00018725"/>
</dbReference>
<dbReference type="GeneID" id="186143"/>
<dbReference type="KEGG" id="cel:CELE_F53A9.2"/>
<dbReference type="UCSC" id="F53A9.2">
    <property type="organism name" value="c. elegans"/>
</dbReference>
<dbReference type="AGR" id="WB:WBGene00018725"/>
<dbReference type="CTD" id="186143"/>
<dbReference type="WormBase" id="F53A9.2">
    <property type="protein sequence ID" value="CE02762"/>
    <property type="gene ID" value="WBGene00018725"/>
    <property type="gene designation" value="kreg-1"/>
</dbReference>
<dbReference type="eggNOG" id="ENOG502TIFU">
    <property type="taxonomic scope" value="Eukaryota"/>
</dbReference>
<dbReference type="GeneTree" id="ENSGT00970000196062"/>
<dbReference type="HOGENOM" id="CLU_2560486_0_0_1"/>
<dbReference type="InParanoid" id="Q20689"/>
<dbReference type="OMA" id="MPPTIHI"/>
<dbReference type="PRO" id="PR:Q20689"/>
<dbReference type="Proteomes" id="UP000001940">
    <property type="component" value="Chromosome X"/>
</dbReference>
<dbReference type="Bgee" id="WBGene00018725">
    <property type="expression patterns" value="Expressed in pharyngeal muscle cell (C elegans) and 3 other cell types or tissues"/>
</dbReference>
<dbReference type="GO" id="GO:0006950">
    <property type="term" value="P:response to stress"/>
    <property type="evidence" value="ECO:0000318"/>
    <property type="project" value="GO_Central"/>
</dbReference>
<dbReference type="GO" id="GO:1990169">
    <property type="term" value="P:stress response to copper ion"/>
    <property type="evidence" value="ECO:0000315"/>
    <property type="project" value="WormBase"/>
</dbReference>
<dbReference type="InterPro" id="IPR040232">
    <property type="entry name" value="Kreg-1"/>
</dbReference>
<dbReference type="PANTHER" id="PTHR31117">
    <property type="entry name" value="PROTEIN KREG-1"/>
    <property type="match status" value="1"/>
</dbReference>
<dbReference type="PANTHER" id="PTHR31117:SF2">
    <property type="entry name" value="PROTEIN KREG-1-RELATED"/>
    <property type="match status" value="1"/>
</dbReference>
<accession>Q20689</accession>
<comment type="function">
    <text evidence="2">Plays a role in the stress response to heavy metals such as copper, probably in a fos-1/kgb-1-dependent manner.</text>
</comment>
<comment type="tissue specificity">
    <text evidence="2">Weakly expressed in the intestine, but expression is up-regulated in response to Cu(2+).</text>
</comment>
<comment type="induction">
    <text evidence="2">By heavy metal stress conditions, in response to Cu(2+).</text>
</comment>
<comment type="disruption phenotype">
    <text evidence="2">RNAi-mediated knockdown results in partial sensitivity to Cu(2+) ions with only 60% of animals reaching adulthood 4 days after egg laying.</text>
</comment>
<organism evidence="4">
    <name type="scientific">Caenorhabditis elegans</name>
    <dbReference type="NCBI Taxonomy" id="6239"/>
    <lineage>
        <taxon>Eukaryota</taxon>
        <taxon>Metazoa</taxon>
        <taxon>Ecdysozoa</taxon>
        <taxon>Nematoda</taxon>
        <taxon>Chromadorea</taxon>
        <taxon>Rhabditida</taxon>
        <taxon>Rhabditina</taxon>
        <taxon>Rhabditomorpha</taxon>
        <taxon>Rhabditoidea</taxon>
        <taxon>Rhabditidae</taxon>
        <taxon>Peloderinae</taxon>
        <taxon>Caenorhabditis</taxon>
    </lineage>
</organism>
<protein>
    <recommendedName>
        <fullName evidence="5">Protein kreg-1</fullName>
    </recommendedName>
</protein>
<reference evidence="4" key="1">
    <citation type="journal article" date="1998" name="Science">
        <title>Genome sequence of the nematode C. elegans: a platform for investigating biology.</title>
        <authorList>
            <consortium name="The C. elegans sequencing consortium"/>
        </authorList>
    </citation>
    <scope>NUCLEOTIDE SEQUENCE [LARGE SCALE GENOMIC DNA]</scope>
    <source>
        <strain evidence="4">Bristol N2</strain>
    </source>
</reference>
<reference evidence="3" key="2">
    <citation type="journal article" date="2013" name="PLoS Genet.">
        <title>The Caenorhabditis elegans JNK signaling pathway activates expression of stress response genes by derepressing the Fos/HDAC repressor complex.</title>
        <authorList>
            <person name="Hattori A."/>
            <person name="Mizuno T."/>
            <person name="Akamatsu M."/>
            <person name="Hisamoto N."/>
            <person name="Matsumoto K."/>
        </authorList>
    </citation>
    <scope>FUNCTION</scope>
    <scope>TISSUE SPECIFICITY</scope>
    <scope>INDUCTION BY COPPER IONS</scope>
    <scope>DISRUPTION PHENOTYPE</scope>
</reference>
<gene>
    <name evidence="5" type="primary">kreg-1</name>
    <name evidence="5" type="ORF">F53A9.2</name>
</gene>
<name>KREG1_CAEEL</name>
<feature type="chain" id="PRO_0000434948" description="Protein kreg-1" evidence="3">
    <location>
        <begin position="1"/>
        <end position="83"/>
    </location>
</feature>
<feature type="region of interest" description="Disordered" evidence="1">
    <location>
        <begin position="62"/>
        <end position="83"/>
    </location>
</feature>